<protein>
    <recommendedName>
        <fullName evidence="1">Lon protease homolog, mitochondrial</fullName>
        <ecNumber evidence="1">3.4.21.53</ecNumber>
    </recommendedName>
</protein>
<gene>
    <name evidence="1" type="primary">PIM1</name>
    <name type="ordered locus">CAALFM_CR04340WA</name>
    <name type="ORF">CaO19.522</name>
</gene>
<comment type="function">
    <text evidence="1">ATP-dependent serine protease that mediates the selective degradation of misfolded, unassembled or oxidatively damaged polypeptides as well as certain short-lived regulatory proteins in the mitochondrial matrix. May also have a chaperone function in the assembly of inner membrane protein complexes. Participates in the regulation of mitochondrial gene expression and in the maintenance of the integrity of the mitochondrial genome. Binds to mitochondrial DNA in a site-specific manner.</text>
</comment>
<comment type="catalytic activity">
    <reaction evidence="1">
        <text>Hydrolysis of proteins in presence of ATP.</text>
        <dbReference type="EC" id="3.4.21.53"/>
    </reaction>
</comment>
<comment type="subunit">
    <text evidence="1">Homohexamer or homoheptamer. Organized in a ring with a central cavity.</text>
</comment>
<comment type="subcellular location">
    <subcellularLocation>
        <location evidence="1">Mitochondrion matrix</location>
    </subcellularLocation>
</comment>
<comment type="similarity">
    <text evidence="1">Belongs to the peptidase S16 family.</text>
</comment>
<feature type="transit peptide" description="Mitochondrion" evidence="1">
    <location>
        <begin position="1"/>
        <end position="27"/>
    </location>
</feature>
<feature type="chain" id="PRO_0000395774" description="Lon protease homolog, mitochondrial">
    <location>
        <begin position="28"/>
        <end position="1078"/>
    </location>
</feature>
<feature type="domain" description="Lon N-terminal" evidence="3">
    <location>
        <begin position="182"/>
        <end position="400"/>
    </location>
</feature>
<feature type="domain" description="Lon proteolytic" evidence="2">
    <location>
        <begin position="861"/>
        <end position="1049"/>
    </location>
</feature>
<feature type="region of interest" description="Disordered" evidence="4">
    <location>
        <begin position="71"/>
        <end position="179"/>
    </location>
</feature>
<feature type="region of interest" description="Disordered" evidence="4">
    <location>
        <begin position="792"/>
        <end position="825"/>
    </location>
</feature>
<feature type="compositionally biased region" description="Basic and acidic residues" evidence="4">
    <location>
        <begin position="71"/>
        <end position="123"/>
    </location>
</feature>
<feature type="compositionally biased region" description="Low complexity" evidence="4">
    <location>
        <begin position="127"/>
        <end position="157"/>
    </location>
</feature>
<feature type="compositionally biased region" description="Basic and acidic residues" evidence="4">
    <location>
        <begin position="158"/>
        <end position="172"/>
    </location>
</feature>
<feature type="compositionally biased region" description="Basic and acidic residues" evidence="4">
    <location>
        <begin position="815"/>
        <end position="825"/>
    </location>
</feature>
<feature type="active site" evidence="1">
    <location>
        <position position="955"/>
    </location>
</feature>
<feature type="active site" evidence="1">
    <location>
        <position position="998"/>
    </location>
</feature>
<feature type="binding site" evidence="1">
    <location>
        <begin position="548"/>
        <end position="555"/>
    </location>
    <ligand>
        <name>ATP</name>
        <dbReference type="ChEBI" id="CHEBI:30616"/>
    </ligand>
</feature>
<dbReference type="EC" id="3.4.21.53" evidence="1"/>
<dbReference type="EMBL" id="CP017630">
    <property type="protein sequence ID" value="AOW31171.1"/>
    <property type="molecule type" value="Genomic_DNA"/>
</dbReference>
<dbReference type="RefSeq" id="XP_717385.1">
    <property type="nucleotide sequence ID" value="XM_712292.1"/>
</dbReference>
<dbReference type="SMR" id="Q5A6N1"/>
<dbReference type="FunCoup" id="Q5A6N1">
    <property type="interactions" value="1040"/>
</dbReference>
<dbReference type="STRING" id="237561.Q5A6N1"/>
<dbReference type="MEROPS" id="S16.010"/>
<dbReference type="EnsemblFungi" id="CR_04340W_A-T">
    <property type="protein sequence ID" value="CR_04340W_A-T-p1"/>
    <property type="gene ID" value="CR_04340W_A"/>
</dbReference>
<dbReference type="GeneID" id="3640999"/>
<dbReference type="KEGG" id="cal:CAALFM_CR04340WA"/>
<dbReference type="CGD" id="CAL0000197537">
    <property type="gene designation" value="PIM1"/>
</dbReference>
<dbReference type="VEuPathDB" id="FungiDB:CR_04340W_A"/>
<dbReference type="eggNOG" id="KOG2004">
    <property type="taxonomic scope" value="Eukaryota"/>
</dbReference>
<dbReference type="HOGENOM" id="CLU_004109_1_0_1"/>
<dbReference type="InParanoid" id="Q5A6N1"/>
<dbReference type="OrthoDB" id="2411602at2759"/>
<dbReference type="Proteomes" id="UP000000559">
    <property type="component" value="Chromosome R"/>
</dbReference>
<dbReference type="GO" id="GO:0005759">
    <property type="term" value="C:mitochondrial matrix"/>
    <property type="evidence" value="ECO:0000318"/>
    <property type="project" value="GO_Central"/>
</dbReference>
<dbReference type="GO" id="GO:0005524">
    <property type="term" value="F:ATP binding"/>
    <property type="evidence" value="ECO:0007669"/>
    <property type="project" value="UniProtKB-UniRule"/>
</dbReference>
<dbReference type="GO" id="GO:0016887">
    <property type="term" value="F:ATP hydrolysis activity"/>
    <property type="evidence" value="ECO:0007669"/>
    <property type="project" value="UniProtKB-UniRule"/>
</dbReference>
<dbReference type="GO" id="GO:0004176">
    <property type="term" value="F:ATP-dependent peptidase activity"/>
    <property type="evidence" value="ECO:0000318"/>
    <property type="project" value="GO_Central"/>
</dbReference>
<dbReference type="GO" id="GO:0043565">
    <property type="term" value="F:sequence-specific DNA binding"/>
    <property type="evidence" value="ECO:0007669"/>
    <property type="project" value="UniProtKB-UniRule"/>
</dbReference>
<dbReference type="GO" id="GO:0004252">
    <property type="term" value="F:serine-type endopeptidase activity"/>
    <property type="evidence" value="ECO:0007669"/>
    <property type="project" value="UniProtKB-UniRule"/>
</dbReference>
<dbReference type="GO" id="GO:0003697">
    <property type="term" value="F:single-stranded DNA binding"/>
    <property type="evidence" value="ECO:0000318"/>
    <property type="project" value="GO_Central"/>
</dbReference>
<dbReference type="GO" id="GO:0034599">
    <property type="term" value="P:cellular response to oxidative stress"/>
    <property type="evidence" value="ECO:0007669"/>
    <property type="project" value="UniProtKB-UniRule"/>
</dbReference>
<dbReference type="GO" id="GO:0051131">
    <property type="term" value="P:chaperone-mediated protein complex assembly"/>
    <property type="evidence" value="ECO:0000318"/>
    <property type="project" value="GO_Central"/>
</dbReference>
<dbReference type="GO" id="GO:0007005">
    <property type="term" value="P:mitochondrion organization"/>
    <property type="evidence" value="ECO:0000318"/>
    <property type="project" value="GO_Central"/>
</dbReference>
<dbReference type="GO" id="GO:0070407">
    <property type="term" value="P:oxidation-dependent protein catabolic process"/>
    <property type="evidence" value="ECO:0007669"/>
    <property type="project" value="UniProtKB-UniRule"/>
</dbReference>
<dbReference type="GO" id="GO:0006515">
    <property type="term" value="P:protein quality control for misfolded or incompletely synthesized proteins"/>
    <property type="evidence" value="ECO:0000318"/>
    <property type="project" value="GO_Central"/>
</dbReference>
<dbReference type="CDD" id="cd19500">
    <property type="entry name" value="RecA-like_Lon"/>
    <property type="match status" value="1"/>
</dbReference>
<dbReference type="FunFam" id="3.40.50.300:FF:003183">
    <property type="entry name" value="Lon protease homolog, mitochondrial"/>
    <property type="match status" value="1"/>
</dbReference>
<dbReference type="Gene3D" id="1.10.8.60">
    <property type="match status" value="1"/>
</dbReference>
<dbReference type="Gene3D" id="1.20.5.5270">
    <property type="match status" value="1"/>
</dbReference>
<dbReference type="Gene3D" id="1.20.58.1480">
    <property type="match status" value="1"/>
</dbReference>
<dbReference type="Gene3D" id="3.30.230.10">
    <property type="match status" value="1"/>
</dbReference>
<dbReference type="Gene3D" id="2.30.130.40">
    <property type="entry name" value="LON domain-like"/>
    <property type="match status" value="1"/>
</dbReference>
<dbReference type="Gene3D" id="3.40.50.300">
    <property type="entry name" value="P-loop containing nucleotide triphosphate hydrolases"/>
    <property type="match status" value="1"/>
</dbReference>
<dbReference type="HAMAP" id="MF_03120">
    <property type="entry name" value="lonm_euk"/>
    <property type="match status" value="1"/>
</dbReference>
<dbReference type="InterPro" id="IPR003593">
    <property type="entry name" value="AAA+_ATPase"/>
</dbReference>
<dbReference type="InterPro" id="IPR003959">
    <property type="entry name" value="ATPase_AAA_core"/>
</dbReference>
<dbReference type="InterPro" id="IPR004815">
    <property type="entry name" value="Lon_bac/euk-typ"/>
</dbReference>
<dbReference type="InterPro" id="IPR054594">
    <property type="entry name" value="Lon_lid"/>
</dbReference>
<dbReference type="InterPro" id="IPR008269">
    <property type="entry name" value="Lon_proteolytic"/>
</dbReference>
<dbReference type="InterPro" id="IPR027065">
    <property type="entry name" value="Lon_Prtase"/>
</dbReference>
<dbReference type="InterPro" id="IPR003111">
    <property type="entry name" value="Lon_prtase_N"/>
</dbReference>
<dbReference type="InterPro" id="IPR046336">
    <property type="entry name" value="Lon_prtase_N_sf"/>
</dbReference>
<dbReference type="InterPro" id="IPR027503">
    <property type="entry name" value="Lonm_euk"/>
</dbReference>
<dbReference type="InterPro" id="IPR027417">
    <property type="entry name" value="P-loop_NTPase"/>
</dbReference>
<dbReference type="InterPro" id="IPR015947">
    <property type="entry name" value="PUA-like_sf"/>
</dbReference>
<dbReference type="InterPro" id="IPR020568">
    <property type="entry name" value="Ribosomal_Su5_D2-typ_SF"/>
</dbReference>
<dbReference type="InterPro" id="IPR014721">
    <property type="entry name" value="Ribsml_uS5_D2-typ_fold_subgr"/>
</dbReference>
<dbReference type="NCBIfam" id="TIGR00763">
    <property type="entry name" value="lon"/>
    <property type="match status" value="1"/>
</dbReference>
<dbReference type="PANTHER" id="PTHR43718">
    <property type="entry name" value="LON PROTEASE"/>
    <property type="match status" value="1"/>
</dbReference>
<dbReference type="PANTHER" id="PTHR43718:SF2">
    <property type="entry name" value="LON PROTEASE HOMOLOG, MITOCHONDRIAL"/>
    <property type="match status" value="1"/>
</dbReference>
<dbReference type="Pfam" id="PF00004">
    <property type="entry name" value="AAA"/>
    <property type="match status" value="1"/>
</dbReference>
<dbReference type="Pfam" id="PF05362">
    <property type="entry name" value="Lon_C"/>
    <property type="match status" value="1"/>
</dbReference>
<dbReference type="Pfam" id="PF22667">
    <property type="entry name" value="Lon_lid"/>
    <property type="match status" value="1"/>
</dbReference>
<dbReference type="Pfam" id="PF02190">
    <property type="entry name" value="LON_substr_bdg"/>
    <property type="match status" value="1"/>
</dbReference>
<dbReference type="PRINTS" id="PR00830">
    <property type="entry name" value="ENDOLAPTASE"/>
</dbReference>
<dbReference type="SMART" id="SM00382">
    <property type="entry name" value="AAA"/>
    <property type="match status" value="1"/>
</dbReference>
<dbReference type="SMART" id="SM00464">
    <property type="entry name" value="LON"/>
    <property type="match status" value="1"/>
</dbReference>
<dbReference type="SUPFAM" id="SSF52540">
    <property type="entry name" value="P-loop containing nucleoside triphosphate hydrolases"/>
    <property type="match status" value="1"/>
</dbReference>
<dbReference type="SUPFAM" id="SSF88697">
    <property type="entry name" value="PUA domain-like"/>
    <property type="match status" value="1"/>
</dbReference>
<dbReference type="SUPFAM" id="SSF54211">
    <property type="entry name" value="Ribosomal protein S5 domain 2-like"/>
    <property type="match status" value="1"/>
</dbReference>
<dbReference type="PROSITE" id="PS51787">
    <property type="entry name" value="LON_N"/>
    <property type="match status" value="1"/>
</dbReference>
<dbReference type="PROSITE" id="PS51786">
    <property type="entry name" value="LON_PROTEOLYTIC"/>
    <property type="match status" value="1"/>
</dbReference>
<accession>Q5A6N1</accession>
<accession>A0A1D8PSQ5</accession>
<reference key="1">
    <citation type="journal article" date="2004" name="Proc. Natl. Acad. Sci. U.S.A.">
        <title>The diploid genome sequence of Candida albicans.</title>
        <authorList>
            <person name="Jones T."/>
            <person name="Federspiel N.A."/>
            <person name="Chibana H."/>
            <person name="Dungan J."/>
            <person name="Kalman S."/>
            <person name="Magee B.B."/>
            <person name="Newport G."/>
            <person name="Thorstenson Y.R."/>
            <person name="Agabian N."/>
            <person name="Magee P.T."/>
            <person name="Davis R.W."/>
            <person name="Scherer S."/>
        </authorList>
    </citation>
    <scope>NUCLEOTIDE SEQUENCE [LARGE SCALE GENOMIC DNA]</scope>
    <source>
        <strain>SC5314 / ATCC MYA-2876</strain>
    </source>
</reference>
<reference key="2">
    <citation type="journal article" date="2007" name="Genome Biol.">
        <title>Assembly of the Candida albicans genome into sixteen supercontigs aligned on the eight chromosomes.</title>
        <authorList>
            <person name="van het Hoog M."/>
            <person name="Rast T.J."/>
            <person name="Martchenko M."/>
            <person name="Grindle S."/>
            <person name="Dignard D."/>
            <person name="Hogues H."/>
            <person name="Cuomo C."/>
            <person name="Berriman M."/>
            <person name="Scherer S."/>
            <person name="Magee B.B."/>
            <person name="Whiteway M."/>
            <person name="Chibana H."/>
            <person name="Nantel A."/>
            <person name="Magee P.T."/>
        </authorList>
    </citation>
    <scope>GENOME REANNOTATION</scope>
    <source>
        <strain>SC5314 / ATCC MYA-2876</strain>
    </source>
</reference>
<reference key="3">
    <citation type="journal article" date="2013" name="Genome Biol.">
        <title>Assembly of a phased diploid Candida albicans genome facilitates allele-specific measurements and provides a simple model for repeat and indel structure.</title>
        <authorList>
            <person name="Muzzey D."/>
            <person name="Schwartz K."/>
            <person name="Weissman J.S."/>
            <person name="Sherlock G."/>
        </authorList>
    </citation>
    <scope>NUCLEOTIDE SEQUENCE [LARGE SCALE GENOMIC DNA]</scope>
    <scope>GENOME REANNOTATION</scope>
    <source>
        <strain>SC5314 / ATCC MYA-2876</strain>
    </source>
</reference>
<name>LONM_CANAL</name>
<evidence type="ECO:0000255" key="1">
    <source>
        <dbReference type="HAMAP-Rule" id="MF_03120"/>
    </source>
</evidence>
<evidence type="ECO:0000255" key="2">
    <source>
        <dbReference type="PROSITE-ProRule" id="PRU01122"/>
    </source>
</evidence>
<evidence type="ECO:0000255" key="3">
    <source>
        <dbReference type="PROSITE-ProRule" id="PRU01123"/>
    </source>
</evidence>
<evidence type="ECO:0000256" key="4">
    <source>
        <dbReference type="SAM" id="MobiDB-lite"/>
    </source>
</evidence>
<organism>
    <name type="scientific">Candida albicans (strain SC5314 / ATCC MYA-2876)</name>
    <name type="common">Yeast</name>
    <dbReference type="NCBI Taxonomy" id="237561"/>
    <lineage>
        <taxon>Eukaryota</taxon>
        <taxon>Fungi</taxon>
        <taxon>Dikarya</taxon>
        <taxon>Ascomycota</taxon>
        <taxon>Saccharomycotina</taxon>
        <taxon>Pichiomycetes</taxon>
        <taxon>Debaryomycetaceae</taxon>
        <taxon>Candida/Lodderomyces clade</taxon>
        <taxon>Candida</taxon>
    </lineage>
</organism>
<sequence>MIKASKCNKPRALFLVRVSIPRTFIRNATSAVPTTIKLNDLASLPPITKSLPTNLPFLMPDTLQSLLRFDSEKEKQPSTDKSNDKDKPSRKEKGKDKEKENEEKKDINMDEKYEINEETDTKPTIDPNNPVSSKSNISSSSGGDNNNNNNNNNNNNDSDGKNDDGSPKDKEFLSPSDSGLHPPFLAIAMKDRPFLPGATRHLHVSDPEVIKCVNHMINSNIKSPYFVLFHVRDTNSEDAALDVIKDRDFVHEVGTLCQIIKTTGSEILVYPHYRVKLVDISTPNSRSESIEKEQDNSQTSYLKKFEVSYAVTQQLKDEPYDEQSITINAWTRRIKELYEKLAPKYDQPENKEEIMSNPSMLADFIASKVHAKPEQIQEILESSNVETKLELSLQLLQVEADADEMRQTALKNIRERTEKAYAQSLIKEYTKELLKAAGIGENSKVHKFDERIKHLKMPEEAMKAYKTEKERLGTQSDMEQNVVERYLDWLTQIPFGVYTKDSFNVKKAREILDRDHYGLKDVKDRILEFISVGKISGNVDGKILCLAGPPGTGKTSIAKSIAEALNRKYTRIAVGGVQDVHDVKGHRRTYVASIPGRIVTALTQAKTSNPLMLIDEIDKLDTTSHGGAARAFLEILDPEQNNSFVDNFIEVKVDLSKVLFVCTANYLGSIPGPLRDRMEIIEVNGYTKNDKIEITKRHLIPAAAKKVGLDEGRVVIPDETISRLIDKYCRESGLRHIKSLINRIFSKASRKIVEELEETDVDSHNKDTVEGTLVAKESEKVISDKAKIDTENSPIEYIQSNTEVKAETTTESQQEQEKEKEKDEEIKKLDLPADLKIEVKPETLKDFVGPEIYIKDRLYETLNPGVATGLAYNTSGDGDALYIESILTDSISSDLGNAGLHVTGSLKDVMKESASIAYSFAKQFMVRQFPDNRFFEAAHIHVHCPGGAIPKDGPSAGIAFTSSLVSLALNKSLPNDTAMTGEITLTGKVLAIGGLREKSLGAKRAGYTKIIFPKDCEYQLDEIPDEVKEGLTYIPVEWYSEVFEHLFQGISKEEGNSVWKEEFAKLEDKKKSKKTNTK</sequence>
<keyword id="KW-0067">ATP-binding</keyword>
<keyword id="KW-0238">DNA-binding</keyword>
<keyword id="KW-0378">Hydrolase</keyword>
<keyword id="KW-0496">Mitochondrion</keyword>
<keyword id="KW-0547">Nucleotide-binding</keyword>
<keyword id="KW-0645">Protease</keyword>
<keyword id="KW-1185">Reference proteome</keyword>
<keyword id="KW-0720">Serine protease</keyword>
<keyword id="KW-0809">Transit peptide</keyword>
<proteinExistence type="inferred from homology"/>